<proteinExistence type="inferred from homology"/>
<feature type="chain" id="PRO_1000062974" description="Thiosulfate sulfurtransferase GlpE">
    <location>
        <begin position="1"/>
        <end position="106"/>
    </location>
</feature>
<feature type="domain" description="Rhodanese" evidence="1">
    <location>
        <begin position="16"/>
        <end position="104"/>
    </location>
</feature>
<feature type="active site" description="Cysteine persulfide intermediate" evidence="1">
    <location>
        <position position="64"/>
    </location>
</feature>
<evidence type="ECO:0000255" key="1">
    <source>
        <dbReference type="HAMAP-Rule" id="MF_01009"/>
    </source>
</evidence>
<comment type="function">
    <text evidence="1">Transferase that catalyzes the transfer of sulfur from thiosulfate to thiophilic acceptors such as cyanide or dithiols. May function in a CysM-independent thiosulfate assimilation pathway by catalyzing the conversion of thiosulfate to sulfite, which can then be used for L-cysteine biosynthesis.</text>
</comment>
<comment type="catalytic activity">
    <reaction evidence="1">
        <text>thiosulfate + hydrogen cyanide = thiocyanate + sulfite + 2 H(+)</text>
        <dbReference type="Rhea" id="RHEA:16881"/>
        <dbReference type="ChEBI" id="CHEBI:15378"/>
        <dbReference type="ChEBI" id="CHEBI:17359"/>
        <dbReference type="ChEBI" id="CHEBI:18022"/>
        <dbReference type="ChEBI" id="CHEBI:18407"/>
        <dbReference type="ChEBI" id="CHEBI:33542"/>
        <dbReference type="EC" id="2.8.1.1"/>
    </reaction>
</comment>
<comment type="catalytic activity">
    <reaction evidence="1">
        <text>thiosulfate + [thioredoxin]-dithiol = [thioredoxin]-disulfide + hydrogen sulfide + sulfite + 2 H(+)</text>
        <dbReference type="Rhea" id="RHEA:83859"/>
        <dbReference type="Rhea" id="RHEA-COMP:10698"/>
        <dbReference type="Rhea" id="RHEA-COMP:10700"/>
        <dbReference type="ChEBI" id="CHEBI:15378"/>
        <dbReference type="ChEBI" id="CHEBI:17359"/>
        <dbReference type="ChEBI" id="CHEBI:29919"/>
        <dbReference type="ChEBI" id="CHEBI:29950"/>
        <dbReference type="ChEBI" id="CHEBI:33542"/>
        <dbReference type="ChEBI" id="CHEBI:50058"/>
    </reaction>
</comment>
<comment type="subcellular location">
    <subcellularLocation>
        <location evidence="1">Cytoplasm</location>
    </subcellularLocation>
</comment>
<comment type="similarity">
    <text evidence="1">Belongs to the GlpE family.</text>
</comment>
<accession>Q4ZMG2</accession>
<gene>
    <name evidence="1" type="primary">glpE</name>
    <name type="ordered locus">Psyr_4630</name>
</gene>
<name>GLPE_PSEU2</name>
<keyword id="KW-0963">Cytoplasm</keyword>
<keyword id="KW-0808">Transferase</keyword>
<dbReference type="EC" id="2.8.1.1" evidence="1"/>
<dbReference type="EMBL" id="CP000075">
    <property type="protein sequence ID" value="AAY39660.1"/>
    <property type="molecule type" value="Genomic_DNA"/>
</dbReference>
<dbReference type="RefSeq" id="WP_011269136.1">
    <property type="nucleotide sequence ID" value="NC_007005.1"/>
</dbReference>
<dbReference type="RefSeq" id="YP_237698.1">
    <property type="nucleotide sequence ID" value="NC_007005.1"/>
</dbReference>
<dbReference type="SMR" id="Q4ZMG2"/>
<dbReference type="STRING" id="205918.Psyr_4630"/>
<dbReference type="KEGG" id="psb:Psyr_4630"/>
<dbReference type="PATRIC" id="fig|205918.7.peg.4775"/>
<dbReference type="eggNOG" id="COG0607">
    <property type="taxonomic scope" value="Bacteria"/>
</dbReference>
<dbReference type="HOGENOM" id="CLU_089574_14_0_6"/>
<dbReference type="OrthoDB" id="9811849at2"/>
<dbReference type="Proteomes" id="UP000000426">
    <property type="component" value="Chromosome"/>
</dbReference>
<dbReference type="GO" id="GO:0005737">
    <property type="term" value="C:cytoplasm"/>
    <property type="evidence" value="ECO:0007669"/>
    <property type="project" value="UniProtKB-SubCell"/>
</dbReference>
<dbReference type="GO" id="GO:0004792">
    <property type="term" value="F:thiosulfate-cyanide sulfurtransferase activity"/>
    <property type="evidence" value="ECO:0007669"/>
    <property type="project" value="UniProtKB-UniRule"/>
</dbReference>
<dbReference type="GO" id="GO:0006071">
    <property type="term" value="P:glycerol metabolic process"/>
    <property type="evidence" value="ECO:0007669"/>
    <property type="project" value="UniProtKB-UniRule"/>
</dbReference>
<dbReference type="CDD" id="cd01444">
    <property type="entry name" value="GlpE_ST"/>
    <property type="match status" value="1"/>
</dbReference>
<dbReference type="Gene3D" id="3.40.250.10">
    <property type="entry name" value="Rhodanese-like domain"/>
    <property type="match status" value="1"/>
</dbReference>
<dbReference type="HAMAP" id="MF_01009">
    <property type="entry name" value="Thiosulf_sulfurtr"/>
    <property type="match status" value="1"/>
</dbReference>
<dbReference type="InterPro" id="IPR050229">
    <property type="entry name" value="GlpE_sulfurtransferase"/>
</dbReference>
<dbReference type="InterPro" id="IPR001763">
    <property type="entry name" value="Rhodanese-like_dom"/>
</dbReference>
<dbReference type="InterPro" id="IPR036873">
    <property type="entry name" value="Rhodanese-like_dom_sf"/>
</dbReference>
<dbReference type="InterPro" id="IPR023695">
    <property type="entry name" value="Thiosulf_sulfurTrfase"/>
</dbReference>
<dbReference type="NCBIfam" id="NF001195">
    <property type="entry name" value="PRK00162.1"/>
    <property type="match status" value="1"/>
</dbReference>
<dbReference type="PANTHER" id="PTHR43031">
    <property type="entry name" value="FAD-DEPENDENT OXIDOREDUCTASE"/>
    <property type="match status" value="1"/>
</dbReference>
<dbReference type="PANTHER" id="PTHR43031:SF6">
    <property type="entry name" value="THIOSULFATE SULFURTRANSFERASE GLPE"/>
    <property type="match status" value="1"/>
</dbReference>
<dbReference type="Pfam" id="PF00581">
    <property type="entry name" value="Rhodanese"/>
    <property type="match status" value="1"/>
</dbReference>
<dbReference type="SMART" id="SM00450">
    <property type="entry name" value="RHOD"/>
    <property type="match status" value="1"/>
</dbReference>
<dbReference type="SUPFAM" id="SSF52821">
    <property type="entry name" value="Rhodanese/Cell cycle control phosphatase"/>
    <property type="match status" value="1"/>
</dbReference>
<dbReference type="PROSITE" id="PS50206">
    <property type="entry name" value="RHODANESE_3"/>
    <property type="match status" value="1"/>
</dbReference>
<organism>
    <name type="scientific">Pseudomonas syringae pv. syringae (strain B728a)</name>
    <dbReference type="NCBI Taxonomy" id="205918"/>
    <lineage>
        <taxon>Bacteria</taxon>
        <taxon>Pseudomonadati</taxon>
        <taxon>Pseudomonadota</taxon>
        <taxon>Gammaproteobacteria</taxon>
        <taxon>Pseudomonadales</taxon>
        <taxon>Pseudomonadaceae</taxon>
        <taxon>Pseudomonas</taxon>
        <taxon>Pseudomonas syringae</taxon>
    </lineage>
</organism>
<reference key="1">
    <citation type="journal article" date="2005" name="Proc. Natl. Acad. Sci. U.S.A.">
        <title>Comparison of the complete genome sequences of Pseudomonas syringae pv. syringae B728a and pv. tomato DC3000.</title>
        <authorList>
            <person name="Feil H."/>
            <person name="Feil W.S."/>
            <person name="Chain P."/>
            <person name="Larimer F."/>
            <person name="Dibartolo G."/>
            <person name="Copeland A."/>
            <person name="Lykidis A."/>
            <person name="Trong S."/>
            <person name="Nolan M."/>
            <person name="Goltsman E."/>
            <person name="Thiel J."/>
            <person name="Malfatti S."/>
            <person name="Loper J.E."/>
            <person name="Lapidus A."/>
            <person name="Detter J.C."/>
            <person name="Land M."/>
            <person name="Richardson P.M."/>
            <person name="Kyrpides N.C."/>
            <person name="Ivanova N."/>
            <person name="Lindow S.E."/>
        </authorList>
    </citation>
    <scope>NUCLEOTIDE SEQUENCE [LARGE SCALE GENOMIC DNA]</scope>
    <source>
        <strain>B728a</strain>
    </source>
</reference>
<protein>
    <recommendedName>
        <fullName evidence="1">Thiosulfate sulfurtransferase GlpE</fullName>
        <ecNumber evidence="1">2.8.1.1</ecNumber>
    </recommendedName>
</protein>
<sequence length="106" mass="11778">MTEFKRIPPEQAQALREQGAVLVDVRDPQAFESNHIPDSVHLDNHSIADFIREADLDKPLVVVCYHGNSSQSAAAYLVGQGFSDVYSVDGGFELWRTTYPQETVQG</sequence>